<keyword id="KW-1015">Disulfide bond</keyword>
<keyword id="KW-0391">Immunity</keyword>
<keyword id="KW-0393">Immunoglobulin domain</keyword>
<keyword id="KW-0490">MHC I</keyword>
<keyword id="KW-0964">Secreted</keyword>
<keyword id="KW-0732">Signal</keyword>
<evidence type="ECO:0000250" key="1"/>
<evidence type="ECO:0000255" key="2">
    <source>
        <dbReference type="PROSITE-ProRule" id="PRU00114"/>
    </source>
</evidence>
<evidence type="ECO:0000305" key="3"/>
<gene>
    <name type="primary">B2M</name>
</gene>
<organism>
    <name type="scientific">Alouatta seniculus</name>
    <name type="common">Red howler monkey</name>
    <dbReference type="NCBI Taxonomy" id="9503"/>
    <lineage>
        <taxon>Eukaryota</taxon>
        <taxon>Metazoa</taxon>
        <taxon>Chordata</taxon>
        <taxon>Craniata</taxon>
        <taxon>Vertebrata</taxon>
        <taxon>Euteleostomi</taxon>
        <taxon>Mammalia</taxon>
        <taxon>Eutheria</taxon>
        <taxon>Euarchontoglires</taxon>
        <taxon>Primates</taxon>
        <taxon>Haplorrhini</taxon>
        <taxon>Platyrrhini</taxon>
        <taxon>Atelidae</taxon>
        <taxon>Alouattinae</taxon>
        <taxon>Alouatta</taxon>
    </lineage>
</organism>
<sequence length="119" mass="13696">MARFVVVALLALLSLSGLEAIQHAPKIQVYSRHPAENGKPNFLNCYVSGFHPSDIEVDLLKNGKKIEKVEHSDLSFSKDWSFYLLYYTEFTPNEKDEYACRVSHVTFPTPKTVKWDRTM</sequence>
<accession>O77523</accession>
<dbReference type="EMBL" id="AF032048">
    <property type="protein sequence ID" value="AAC52091.1"/>
    <property type="molecule type" value="Genomic_DNA"/>
</dbReference>
<dbReference type="EMBL" id="AF032047">
    <property type="protein sequence ID" value="AAC52091.1"/>
    <property type="status" value="JOINED"/>
    <property type="molecule type" value="Genomic_DNA"/>
</dbReference>
<dbReference type="SMR" id="O77523"/>
<dbReference type="GO" id="GO:0005576">
    <property type="term" value="C:extracellular region"/>
    <property type="evidence" value="ECO:0007669"/>
    <property type="project" value="UniProtKB-SubCell"/>
</dbReference>
<dbReference type="GO" id="GO:0042612">
    <property type="term" value="C:MHC class I protein complex"/>
    <property type="evidence" value="ECO:0007669"/>
    <property type="project" value="UniProtKB-KW"/>
</dbReference>
<dbReference type="GO" id="GO:0002474">
    <property type="term" value="P:antigen processing and presentation of peptide antigen via MHC class I"/>
    <property type="evidence" value="ECO:0007669"/>
    <property type="project" value="UniProtKB-KW"/>
</dbReference>
<dbReference type="GO" id="GO:0006955">
    <property type="term" value="P:immune response"/>
    <property type="evidence" value="ECO:0007669"/>
    <property type="project" value="InterPro"/>
</dbReference>
<dbReference type="CDD" id="cd05770">
    <property type="entry name" value="IgC1_beta2m"/>
    <property type="match status" value="1"/>
</dbReference>
<dbReference type="FunFam" id="2.60.40.10:FF:001005">
    <property type="entry name" value="Beta-2-microglobulin"/>
    <property type="match status" value="1"/>
</dbReference>
<dbReference type="Gene3D" id="2.60.40.10">
    <property type="entry name" value="Immunoglobulins"/>
    <property type="match status" value="1"/>
</dbReference>
<dbReference type="InterPro" id="IPR015707">
    <property type="entry name" value="B2Microglobulin"/>
</dbReference>
<dbReference type="InterPro" id="IPR007110">
    <property type="entry name" value="Ig-like_dom"/>
</dbReference>
<dbReference type="InterPro" id="IPR036179">
    <property type="entry name" value="Ig-like_dom_sf"/>
</dbReference>
<dbReference type="InterPro" id="IPR013783">
    <property type="entry name" value="Ig-like_fold"/>
</dbReference>
<dbReference type="InterPro" id="IPR003006">
    <property type="entry name" value="Ig/MHC_CS"/>
</dbReference>
<dbReference type="InterPro" id="IPR003597">
    <property type="entry name" value="Ig_C1-set"/>
</dbReference>
<dbReference type="InterPro" id="IPR050160">
    <property type="entry name" value="MHC/Immunoglobulin"/>
</dbReference>
<dbReference type="PANTHER" id="PTHR19944:SF62">
    <property type="entry name" value="BETA-2-MICROGLOBULIN"/>
    <property type="match status" value="1"/>
</dbReference>
<dbReference type="PANTHER" id="PTHR19944">
    <property type="entry name" value="MHC CLASS II-RELATED"/>
    <property type="match status" value="1"/>
</dbReference>
<dbReference type="Pfam" id="PF07654">
    <property type="entry name" value="C1-set"/>
    <property type="match status" value="1"/>
</dbReference>
<dbReference type="SMART" id="SM00407">
    <property type="entry name" value="IGc1"/>
    <property type="match status" value="1"/>
</dbReference>
<dbReference type="SUPFAM" id="SSF48726">
    <property type="entry name" value="Immunoglobulin"/>
    <property type="match status" value="1"/>
</dbReference>
<dbReference type="PROSITE" id="PS50835">
    <property type="entry name" value="IG_LIKE"/>
    <property type="match status" value="1"/>
</dbReference>
<dbReference type="PROSITE" id="PS00290">
    <property type="entry name" value="IG_MHC"/>
    <property type="match status" value="1"/>
</dbReference>
<feature type="signal peptide" evidence="1">
    <location>
        <begin position="1"/>
        <end position="20"/>
    </location>
</feature>
<feature type="chain" id="PRO_0000018751" description="Beta-2-microglobulin">
    <location>
        <begin position="21"/>
        <end position="119"/>
    </location>
</feature>
<feature type="domain" description="Ig-like C1-type">
    <location>
        <begin position="25"/>
        <end position="114"/>
    </location>
</feature>
<feature type="disulfide bond" evidence="2">
    <location>
        <begin position="45"/>
        <end position="100"/>
    </location>
</feature>
<reference key="1">
    <citation type="journal article" date="1998" name="Immunogenetics">
        <title>Beta-2-microglobulin in neotropical primates (Platyrrhini).</title>
        <authorList>
            <person name="Canavez F.C."/>
            <person name="Ladasky J.J."/>
            <person name="Muniz J.A.P.C."/>
            <person name="Seuanez H.N."/>
            <person name="Parham P."/>
        </authorList>
    </citation>
    <scope>NUCLEOTIDE SEQUENCE [GENOMIC DNA]</scope>
    <source>
        <tissue>Blood</tissue>
    </source>
</reference>
<name>B2MG_ALOSE</name>
<proteinExistence type="inferred from homology"/>
<comment type="function">
    <text evidence="1">Component of the class I major histocompatibility complex (MHC). Involved in the presentation of peptide antigens to the immune system (By similarity).</text>
</comment>
<comment type="subunit">
    <text evidence="1">Heterodimer of an alpha chain and a beta chain. Beta-2-microglobulin is the beta-chain of major histocompatibility complex class I molecules (By similarity).</text>
</comment>
<comment type="subcellular location">
    <subcellularLocation>
        <location evidence="1">Secreted</location>
    </subcellularLocation>
</comment>
<comment type="similarity">
    <text evidence="3">Belongs to the beta-2-microglobulin family.</text>
</comment>
<protein>
    <recommendedName>
        <fullName>Beta-2-microglobulin</fullName>
    </recommendedName>
</protein>